<reference key="1">
    <citation type="journal article" date="2005" name="Nature">
        <title>Sequencing of Aspergillus nidulans and comparative analysis with A. fumigatus and A. oryzae.</title>
        <authorList>
            <person name="Galagan J.E."/>
            <person name="Calvo S.E."/>
            <person name="Cuomo C."/>
            <person name="Ma L.-J."/>
            <person name="Wortman J.R."/>
            <person name="Batzoglou S."/>
            <person name="Lee S.-I."/>
            <person name="Bastuerkmen M."/>
            <person name="Spevak C.C."/>
            <person name="Clutterbuck J."/>
            <person name="Kapitonov V."/>
            <person name="Jurka J."/>
            <person name="Scazzocchio C."/>
            <person name="Farman M.L."/>
            <person name="Butler J."/>
            <person name="Purcell S."/>
            <person name="Harris S."/>
            <person name="Braus G.H."/>
            <person name="Draht O."/>
            <person name="Busch S."/>
            <person name="D'Enfert C."/>
            <person name="Bouchier C."/>
            <person name="Goldman G.H."/>
            <person name="Bell-Pedersen D."/>
            <person name="Griffiths-Jones S."/>
            <person name="Doonan J.H."/>
            <person name="Yu J."/>
            <person name="Vienken K."/>
            <person name="Pain A."/>
            <person name="Freitag M."/>
            <person name="Selker E.U."/>
            <person name="Archer D.B."/>
            <person name="Penalva M.A."/>
            <person name="Oakley B.R."/>
            <person name="Momany M."/>
            <person name="Tanaka T."/>
            <person name="Kumagai T."/>
            <person name="Asai K."/>
            <person name="Machida M."/>
            <person name="Nierman W.C."/>
            <person name="Denning D.W."/>
            <person name="Caddick M.X."/>
            <person name="Hynes M."/>
            <person name="Paoletti M."/>
            <person name="Fischer R."/>
            <person name="Miller B.L."/>
            <person name="Dyer P.S."/>
            <person name="Sachs M.S."/>
            <person name="Osmani S.A."/>
            <person name="Birren B.W."/>
        </authorList>
    </citation>
    <scope>NUCLEOTIDE SEQUENCE [LARGE SCALE GENOMIC DNA]</scope>
    <source>
        <strain>FGSC A4 / ATCC 38163 / CBS 112.46 / NRRL 194 / M139</strain>
    </source>
</reference>
<reference key="2">
    <citation type="journal article" date="2009" name="Fungal Genet. Biol.">
        <title>The 2008 update of the Aspergillus nidulans genome annotation: a community effort.</title>
        <authorList>
            <person name="Wortman J.R."/>
            <person name="Gilsenan J.M."/>
            <person name="Joardar V."/>
            <person name="Deegan J."/>
            <person name="Clutterbuck J."/>
            <person name="Andersen M.R."/>
            <person name="Archer D."/>
            <person name="Bencina M."/>
            <person name="Braus G."/>
            <person name="Coutinho P."/>
            <person name="von Dohren H."/>
            <person name="Doonan J."/>
            <person name="Driessen A.J."/>
            <person name="Durek P."/>
            <person name="Espeso E."/>
            <person name="Fekete E."/>
            <person name="Flipphi M."/>
            <person name="Estrada C.G."/>
            <person name="Geysens S."/>
            <person name="Goldman G."/>
            <person name="de Groot P.W."/>
            <person name="Hansen K."/>
            <person name="Harris S.D."/>
            <person name="Heinekamp T."/>
            <person name="Helmstaedt K."/>
            <person name="Henrissat B."/>
            <person name="Hofmann G."/>
            <person name="Homan T."/>
            <person name="Horio T."/>
            <person name="Horiuchi H."/>
            <person name="James S."/>
            <person name="Jones M."/>
            <person name="Karaffa L."/>
            <person name="Karanyi Z."/>
            <person name="Kato M."/>
            <person name="Keller N."/>
            <person name="Kelly D.E."/>
            <person name="Kiel J.A."/>
            <person name="Kim J.M."/>
            <person name="van der Klei I.J."/>
            <person name="Klis F.M."/>
            <person name="Kovalchuk A."/>
            <person name="Krasevec N."/>
            <person name="Kubicek C.P."/>
            <person name="Liu B."/>
            <person name="Maccabe A."/>
            <person name="Meyer V."/>
            <person name="Mirabito P."/>
            <person name="Miskei M."/>
            <person name="Mos M."/>
            <person name="Mullins J."/>
            <person name="Nelson D.R."/>
            <person name="Nielsen J."/>
            <person name="Oakley B.R."/>
            <person name="Osmani S.A."/>
            <person name="Pakula T."/>
            <person name="Paszewski A."/>
            <person name="Paulsen I."/>
            <person name="Pilsyk S."/>
            <person name="Pocsi I."/>
            <person name="Punt P.J."/>
            <person name="Ram A.F."/>
            <person name="Ren Q."/>
            <person name="Robellet X."/>
            <person name="Robson G."/>
            <person name="Seiboth B."/>
            <person name="van Solingen P."/>
            <person name="Specht T."/>
            <person name="Sun J."/>
            <person name="Taheri-Talesh N."/>
            <person name="Takeshita N."/>
            <person name="Ussery D."/>
            <person name="vanKuyk P.A."/>
            <person name="Visser H."/>
            <person name="van de Vondervoort P.J."/>
            <person name="de Vries R.P."/>
            <person name="Walton J."/>
            <person name="Xiang X."/>
            <person name="Xiong Y."/>
            <person name="Zeng A.P."/>
            <person name="Brandt B.W."/>
            <person name="Cornell M.J."/>
            <person name="van den Hondel C.A."/>
            <person name="Visser J."/>
            <person name="Oliver S.G."/>
            <person name="Turner G."/>
        </authorList>
    </citation>
    <scope>GENOME REANNOTATION</scope>
    <source>
        <strain>FGSC A4 / ATCC 38163 / CBS 112.46 / NRRL 194 / M139</strain>
    </source>
</reference>
<reference key="3">
    <citation type="journal article" date="2012" name="J. Am. Chem. Soc.">
        <title>Illuminating the diversity of aromatic polyketide synthases in Aspergillus nidulans.</title>
        <authorList>
            <person name="Ahuja M."/>
            <person name="Chiang Y.M."/>
            <person name="Chang S.L."/>
            <person name="Praseuth M.B."/>
            <person name="Entwistle R."/>
            <person name="Sanchez J.F."/>
            <person name="Lo H.C."/>
            <person name="Yeh H.H."/>
            <person name="Oakley B.R."/>
            <person name="Wang C.C."/>
        </authorList>
    </citation>
    <scope>IDENTIFICATION</scope>
    <scope>FUNCTION</scope>
</reference>
<reference key="4">
    <citation type="journal article" date="2013" name="Proc. Natl. Acad. Sci. U.S.A.">
        <title>Accurate prediction of secondary metabolite gene clusters in filamentous fungi.</title>
        <authorList>
            <person name="Andersen M.R."/>
            <person name="Nielsen J.B."/>
            <person name="Klitgaard A."/>
            <person name="Petersen L.M."/>
            <person name="Zachariasen M."/>
            <person name="Hansen T.J."/>
            <person name="Blicher L.H."/>
            <person name="Gotfredsen C.H."/>
            <person name="Larsen T.O."/>
            <person name="Nielsen K.F."/>
            <person name="Mortensen U.H."/>
        </authorList>
    </citation>
    <scope>IDENTIFICATION</scope>
    <scope>FUNCTION</scope>
</reference>
<reference key="5">
    <citation type="journal article" date="2024" name="J. Nat. Prod.">
        <title>Transcription Factor Engineering in Aspergillus nidulans Leads to the Discovery of an Orsellinaldehyde Derivative Produced via an Unlinked Polyketide Synthase Gene.</title>
        <authorList>
            <person name="Rabot C."/>
            <person name="Grau M.F."/>
            <person name="Entwistle R."/>
            <person name="Chiang Y.M."/>
            <person name="Zamora de Roberts Y."/>
            <person name="Ahuja M."/>
            <person name="Oakley C.E."/>
            <person name="Wang C.C.C."/>
            <person name="Todd R.B."/>
            <person name="Oakley B.R."/>
        </authorList>
    </citation>
    <scope>FUNCTION</scope>
    <scope>INDUCTION</scope>
</reference>
<organism>
    <name type="scientific">Emericella nidulans (strain FGSC A4 / ATCC 38163 / CBS 112.46 / NRRL 194 / M139)</name>
    <name type="common">Aspergillus nidulans</name>
    <dbReference type="NCBI Taxonomy" id="227321"/>
    <lineage>
        <taxon>Eukaryota</taxon>
        <taxon>Fungi</taxon>
        <taxon>Dikarya</taxon>
        <taxon>Ascomycota</taxon>
        <taxon>Pezizomycotina</taxon>
        <taxon>Eurotiomycetes</taxon>
        <taxon>Eurotiomycetidae</taxon>
        <taxon>Eurotiales</taxon>
        <taxon>Aspergillaceae</taxon>
        <taxon>Aspergillus</taxon>
        <taxon>Aspergillus subgen. Nidulantes</taxon>
    </lineage>
</organism>
<name>PKS91_EMENI</name>
<keyword id="KW-0012">Acyltransferase</keyword>
<keyword id="KW-0489">Methyltransferase</keyword>
<keyword id="KW-0511">Multifunctional enzyme</keyword>
<keyword id="KW-0521">NADP</keyword>
<keyword id="KW-0560">Oxidoreductase</keyword>
<keyword id="KW-0596">Phosphopantetheine</keyword>
<keyword id="KW-0597">Phosphoprotein</keyword>
<keyword id="KW-1185">Reference proteome</keyword>
<keyword id="KW-0808">Transferase</keyword>
<accession>Q5AY39</accession>
<accession>C8V281</accession>
<gene>
    <name type="ORF">AN6791</name>
    <name type="ORF">ANIA_06791</name>
</gene>
<dbReference type="EC" id="2.3.1.-" evidence="5"/>
<dbReference type="EMBL" id="BN001301">
    <property type="protein sequence ID" value="CBF71467.1"/>
    <property type="molecule type" value="Genomic_DNA"/>
</dbReference>
<dbReference type="RefSeq" id="XP_664395.1">
    <property type="nucleotide sequence ID" value="XM_659303.1"/>
</dbReference>
<dbReference type="STRING" id="227321.Q5AY39"/>
<dbReference type="EnsemblFungi" id="CBF71467">
    <property type="protein sequence ID" value="CBF71467"/>
    <property type="gene ID" value="ANIA_06791"/>
</dbReference>
<dbReference type="GeneID" id="2870317"/>
<dbReference type="KEGG" id="ani:ANIA_06791"/>
<dbReference type="VEuPathDB" id="FungiDB:AN6791"/>
<dbReference type="eggNOG" id="KOG1202">
    <property type="taxonomic scope" value="Eukaryota"/>
</dbReference>
<dbReference type="HOGENOM" id="CLU_000022_31_0_1"/>
<dbReference type="InParanoid" id="Q5AY39"/>
<dbReference type="OMA" id="FSIPICA"/>
<dbReference type="OrthoDB" id="329835at2759"/>
<dbReference type="Proteomes" id="UP000000560">
    <property type="component" value="Chromosome I"/>
</dbReference>
<dbReference type="GO" id="GO:0004312">
    <property type="term" value="F:fatty acid synthase activity"/>
    <property type="evidence" value="ECO:0000318"/>
    <property type="project" value="GO_Central"/>
</dbReference>
<dbReference type="GO" id="GO:0008168">
    <property type="term" value="F:methyltransferase activity"/>
    <property type="evidence" value="ECO:0007669"/>
    <property type="project" value="UniProtKB-KW"/>
</dbReference>
<dbReference type="GO" id="GO:0016491">
    <property type="term" value="F:oxidoreductase activity"/>
    <property type="evidence" value="ECO:0007669"/>
    <property type="project" value="UniProtKB-KW"/>
</dbReference>
<dbReference type="GO" id="GO:0031177">
    <property type="term" value="F:phosphopantetheine binding"/>
    <property type="evidence" value="ECO:0007669"/>
    <property type="project" value="InterPro"/>
</dbReference>
<dbReference type="GO" id="GO:0008270">
    <property type="term" value="F:zinc ion binding"/>
    <property type="evidence" value="ECO:0007669"/>
    <property type="project" value="InterPro"/>
</dbReference>
<dbReference type="GO" id="GO:0006633">
    <property type="term" value="P:fatty acid biosynthetic process"/>
    <property type="evidence" value="ECO:0000318"/>
    <property type="project" value="GO_Central"/>
</dbReference>
<dbReference type="GO" id="GO:0032259">
    <property type="term" value="P:methylation"/>
    <property type="evidence" value="ECO:0007669"/>
    <property type="project" value="UniProtKB-KW"/>
</dbReference>
<dbReference type="GO" id="GO:0030639">
    <property type="term" value="P:polyketide biosynthetic process"/>
    <property type="evidence" value="ECO:0007669"/>
    <property type="project" value="UniProtKB-ARBA"/>
</dbReference>
<dbReference type="GO" id="GO:0019748">
    <property type="term" value="P:secondary metabolic process"/>
    <property type="evidence" value="ECO:0000303"/>
    <property type="project" value="AspGD"/>
</dbReference>
<dbReference type="GO" id="GO:0044550">
    <property type="term" value="P:secondary metabolite biosynthetic process"/>
    <property type="evidence" value="ECO:0000318"/>
    <property type="project" value="GO_Central"/>
</dbReference>
<dbReference type="CDD" id="cd02440">
    <property type="entry name" value="AdoMet_MTases"/>
    <property type="match status" value="1"/>
</dbReference>
<dbReference type="CDD" id="cd05195">
    <property type="entry name" value="enoyl_red"/>
    <property type="match status" value="1"/>
</dbReference>
<dbReference type="CDD" id="cd00833">
    <property type="entry name" value="PKS"/>
    <property type="match status" value="1"/>
</dbReference>
<dbReference type="FunFam" id="3.40.50.720:FF:000209">
    <property type="entry name" value="Polyketide synthase Pks12"/>
    <property type="match status" value="1"/>
</dbReference>
<dbReference type="FunFam" id="3.40.366.10:FF:000002">
    <property type="entry name" value="Probable polyketide synthase 2"/>
    <property type="match status" value="1"/>
</dbReference>
<dbReference type="Gene3D" id="3.30.70.3290">
    <property type="match status" value="1"/>
</dbReference>
<dbReference type="Gene3D" id="3.40.47.10">
    <property type="match status" value="1"/>
</dbReference>
<dbReference type="Gene3D" id="1.10.1200.10">
    <property type="entry name" value="ACP-like"/>
    <property type="match status" value="1"/>
</dbReference>
<dbReference type="Gene3D" id="3.40.366.10">
    <property type="entry name" value="Malonyl-Coenzyme A Acyl Carrier Protein, domain 2"/>
    <property type="match status" value="1"/>
</dbReference>
<dbReference type="Gene3D" id="3.90.180.10">
    <property type="entry name" value="Medium-chain alcohol dehydrogenases, catalytic domain"/>
    <property type="match status" value="1"/>
</dbReference>
<dbReference type="Gene3D" id="3.40.50.720">
    <property type="entry name" value="NAD(P)-binding Rossmann-like Domain"/>
    <property type="match status" value="2"/>
</dbReference>
<dbReference type="Gene3D" id="3.10.129.110">
    <property type="entry name" value="Polyketide synthase dehydratase"/>
    <property type="match status" value="1"/>
</dbReference>
<dbReference type="Gene3D" id="3.40.50.150">
    <property type="entry name" value="Vaccinia Virus protein VP39"/>
    <property type="match status" value="1"/>
</dbReference>
<dbReference type="InterPro" id="IPR001227">
    <property type="entry name" value="Ac_transferase_dom_sf"/>
</dbReference>
<dbReference type="InterPro" id="IPR036736">
    <property type="entry name" value="ACP-like_sf"/>
</dbReference>
<dbReference type="InterPro" id="IPR014043">
    <property type="entry name" value="Acyl_transferase_dom"/>
</dbReference>
<dbReference type="InterPro" id="IPR016035">
    <property type="entry name" value="Acyl_Trfase/lysoPLipase"/>
</dbReference>
<dbReference type="InterPro" id="IPR013149">
    <property type="entry name" value="ADH-like_C"/>
</dbReference>
<dbReference type="InterPro" id="IPR013154">
    <property type="entry name" value="ADH-like_N"/>
</dbReference>
<dbReference type="InterPro" id="IPR011032">
    <property type="entry name" value="GroES-like_sf"/>
</dbReference>
<dbReference type="InterPro" id="IPR014031">
    <property type="entry name" value="Ketoacyl_synth_C"/>
</dbReference>
<dbReference type="InterPro" id="IPR014030">
    <property type="entry name" value="Ketoacyl_synth_N"/>
</dbReference>
<dbReference type="InterPro" id="IPR016036">
    <property type="entry name" value="Malonyl_transacylase_ACP-bd"/>
</dbReference>
<dbReference type="InterPro" id="IPR013217">
    <property type="entry name" value="Methyltransf_12"/>
</dbReference>
<dbReference type="InterPro" id="IPR036291">
    <property type="entry name" value="NAD(P)-bd_dom_sf"/>
</dbReference>
<dbReference type="InterPro" id="IPR056501">
    <property type="entry name" value="NAD-bd_HRPKS_sdrA"/>
</dbReference>
<dbReference type="InterPro" id="IPR032821">
    <property type="entry name" value="PKS_assoc"/>
</dbReference>
<dbReference type="InterPro" id="IPR020841">
    <property type="entry name" value="PKS_Beta-ketoAc_synthase_dom"/>
</dbReference>
<dbReference type="InterPro" id="IPR042104">
    <property type="entry name" value="PKS_dehydratase_sf"/>
</dbReference>
<dbReference type="InterPro" id="IPR020807">
    <property type="entry name" value="PKS_DH"/>
</dbReference>
<dbReference type="InterPro" id="IPR049551">
    <property type="entry name" value="PKS_DH_C"/>
</dbReference>
<dbReference type="InterPro" id="IPR049552">
    <property type="entry name" value="PKS_DH_N"/>
</dbReference>
<dbReference type="InterPro" id="IPR020843">
    <property type="entry name" value="PKS_ER"/>
</dbReference>
<dbReference type="InterPro" id="IPR013968">
    <property type="entry name" value="PKS_KR"/>
</dbReference>
<dbReference type="InterPro" id="IPR049900">
    <property type="entry name" value="PKS_mFAS_DH"/>
</dbReference>
<dbReference type="InterPro" id="IPR050091">
    <property type="entry name" value="PKS_NRPS_Biosynth_Enz"/>
</dbReference>
<dbReference type="InterPro" id="IPR020806">
    <property type="entry name" value="PKS_PP-bd"/>
</dbReference>
<dbReference type="InterPro" id="IPR009081">
    <property type="entry name" value="PP-bd_ACP"/>
</dbReference>
<dbReference type="InterPro" id="IPR006162">
    <property type="entry name" value="Ppantetheine_attach_site"/>
</dbReference>
<dbReference type="InterPro" id="IPR002364">
    <property type="entry name" value="Quin_OxRdtase/zeta-crystal_CS"/>
</dbReference>
<dbReference type="InterPro" id="IPR029063">
    <property type="entry name" value="SAM-dependent_MTases_sf"/>
</dbReference>
<dbReference type="InterPro" id="IPR016039">
    <property type="entry name" value="Thiolase-like"/>
</dbReference>
<dbReference type="PANTHER" id="PTHR43775:SF29">
    <property type="entry name" value="ASPERFURANONE POLYKETIDE SYNTHASE AFOG-RELATED"/>
    <property type="match status" value="1"/>
</dbReference>
<dbReference type="PANTHER" id="PTHR43775">
    <property type="entry name" value="FATTY ACID SYNTHASE"/>
    <property type="match status" value="1"/>
</dbReference>
<dbReference type="Pfam" id="PF23297">
    <property type="entry name" value="ACP_SdgA_C"/>
    <property type="match status" value="1"/>
</dbReference>
<dbReference type="Pfam" id="PF00698">
    <property type="entry name" value="Acyl_transf_1"/>
    <property type="match status" value="1"/>
</dbReference>
<dbReference type="Pfam" id="PF08240">
    <property type="entry name" value="ADH_N"/>
    <property type="match status" value="1"/>
</dbReference>
<dbReference type="Pfam" id="PF00107">
    <property type="entry name" value="ADH_zinc_N"/>
    <property type="match status" value="1"/>
</dbReference>
<dbReference type="Pfam" id="PF16197">
    <property type="entry name" value="KAsynt_C_assoc"/>
    <property type="match status" value="1"/>
</dbReference>
<dbReference type="Pfam" id="PF00109">
    <property type="entry name" value="ketoacyl-synt"/>
    <property type="match status" value="1"/>
</dbReference>
<dbReference type="Pfam" id="PF02801">
    <property type="entry name" value="Ketoacyl-synt_C"/>
    <property type="match status" value="1"/>
</dbReference>
<dbReference type="Pfam" id="PF08659">
    <property type="entry name" value="KR"/>
    <property type="match status" value="1"/>
</dbReference>
<dbReference type="Pfam" id="PF08242">
    <property type="entry name" value="Methyltransf_12"/>
    <property type="match status" value="1"/>
</dbReference>
<dbReference type="Pfam" id="PF23114">
    <property type="entry name" value="NAD-bd_HRPKS_sdrA"/>
    <property type="match status" value="1"/>
</dbReference>
<dbReference type="Pfam" id="PF21089">
    <property type="entry name" value="PKS_DH_N"/>
    <property type="match status" value="1"/>
</dbReference>
<dbReference type="Pfam" id="PF14765">
    <property type="entry name" value="PS-DH"/>
    <property type="match status" value="1"/>
</dbReference>
<dbReference type="SMART" id="SM00827">
    <property type="entry name" value="PKS_AT"/>
    <property type="match status" value="1"/>
</dbReference>
<dbReference type="SMART" id="SM00826">
    <property type="entry name" value="PKS_DH"/>
    <property type="match status" value="1"/>
</dbReference>
<dbReference type="SMART" id="SM00829">
    <property type="entry name" value="PKS_ER"/>
    <property type="match status" value="1"/>
</dbReference>
<dbReference type="SMART" id="SM00822">
    <property type="entry name" value="PKS_KR"/>
    <property type="match status" value="1"/>
</dbReference>
<dbReference type="SMART" id="SM00825">
    <property type="entry name" value="PKS_KS"/>
    <property type="match status" value="1"/>
</dbReference>
<dbReference type="SMART" id="SM00823">
    <property type="entry name" value="PKS_PP"/>
    <property type="match status" value="1"/>
</dbReference>
<dbReference type="SUPFAM" id="SSF47336">
    <property type="entry name" value="ACP-like"/>
    <property type="match status" value="1"/>
</dbReference>
<dbReference type="SUPFAM" id="SSF52151">
    <property type="entry name" value="FabD/lysophospholipase-like"/>
    <property type="match status" value="1"/>
</dbReference>
<dbReference type="SUPFAM" id="SSF50129">
    <property type="entry name" value="GroES-like"/>
    <property type="match status" value="1"/>
</dbReference>
<dbReference type="SUPFAM" id="SSF51735">
    <property type="entry name" value="NAD(P)-binding Rossmann-fold domains"/>
    <property type="match status" value="2"/>
</dbReference>
<dbReference type="SUPFAM" id="SSF55048">
    <property type="entry name" value="Probable ACP-binding domain of malonyl-CoA ACP transacylase"/>
    <property type="match status" value="1"/>
</dbReference>
<dbReference type="SUPFAM" id="SSF53335">
    <property type="entry name" value="S-adenosyl-L-methionine-dependent methyltransferases"/>
    <property type="match status" value="1"/>
</dbReference>
<dbReference type="SUPFAM" id="SSF53901">
    <property type="entry name" value="Thiolase-like"/>
    <property type="match status" value="1"/>
</dbReference>
<dbReference type="PROSITE" id="PS50075">
    <property type="entry name" value="CARRIER"/>
    <property type="match status" value="1"/>
</dbReference>
<dbReference type="PROSITE" id="PS52004">
    <property type="entry name" value="KS3_2"/>
    <property type="match status" value="1"/>
</dbReference>
<dbReference type="PROSITE" id="PS00012">
    <property type="entry name" value="PHOSPHOPANTETHEINE"/>
    <property type="match status" value="1"/>
</dbReference>
<dbReference type="PROSITE" id="PS52019">
    <property type="entry name" value="PKS_MFAS_DH"/>
    <property type="match status" value="1"/>
</dbReference>
<dbReference type="PROSITE" id="PS01162">
    <property type="entry name" value="QOR_ZETA_CRYSTAL"/>
    <property type="match status" value="1"/>
</dbReference>
<sequence>MQSAGMHRATAEPIAIVGLSCKFAGEASTPDRLWEMLAAGRSAWSEIPPSRFNLKGAYHPSADRTNTVCFNSLCRGNPTEEKKVHVRGGHFLEQDLGLFDAQFFSFSAETAASMDPQIRLQLESVYEALENAGITLPDVAGSNTAVYAAVFSRDYRDGIIRDEDRLPRFLPTGTGDAMFSNRVSHFFDLRGPSITLDTGCSGGLVALHEGVKSLRTGESDMALISGEGLTDEGRFFSPDGKSYAFDSRANGYGRGEGIATIVIKRLSDAIIAGDPIRAIVRESGLNQDGKTETITTPSEEAQVALMRDCYRRAGLDYADTQYLEAHGTGTSTGDPIECRAIATVFKDSRSSEQPLRIGSVKTNVGHTEAASGLASLIKVVMALEKGKIPPSINFEKPNPKIALDEWNLRVVTTLEDWPAGPGGVRRASINNFGFGGTNAHLIVESQAAQPLPWQADGYGASATNLDSQIFVFSARDKQACVNMVNNLKKYLRQNAATDSPDFLLQRVAYTLGQRRTRFPWVTARPVPVQNGFREAIQALEVNMPVPRRTTGIPRIGMVFTGQGAQWYAMGRELIAAYPVFKASLKETDRHLAALGARWSVIEELNQDIPASRVHDVEYSTPLCVAVQISLVRLLRSWGVKPVAVTSHSSGEIAAAYAVGALGCQDAMAVAYHRALLATRSSLGSKQGAMLVVGMSLEETETYLARIDAQIGIATVACVNSPSSITVSGDQDAVNALEALARNDGIFTHRLKIHTAFHSHHMNPIADLYRSALQGALSPNHDKVESDITFSSPVTGRRITNLSQLSEPDHWVDSLLKPVQFVDAFTDMVLGASGASSANVDLILEVGPHTALGAPIKQILAEPKFAGLDISCLGSLVREVSAVRSMHSLAASLVAEGLPLDLDAVNFPHGRPPSVRALSDLPSYPWNHQTRHWYESRFNKGLRERAQPPHDLLGSLVLGTDPNSPTWRHILKLKDAPWLREHVVQEDILFPGAGFICLAIEAIKMLPELQSKAPQAAAGYRLRDVDLLQGLVIPDNDDGVEIQTSLSEVSDKEMGNRGWKRFEVSSVSADNQWSTHARGLITMEPEDAPDKTITKSRPADLSGYTRRFGPSDLYDMMRERGIYHGPAFQIITDIEQAGNNQRADSSLFIPDTAIPADSPYQTLIHPITLDAAFQTVYAPLLGGKEWDDAIVPRTLGSLWISNSISQAAGHRFKAFAILHHSDARTMRSDIYMADNNSDASPVLMVRNAVFQSVGRSAAPQQVKAQWESEPCTNVVWGPDMSLLSTPMRAQLKQQLSHPPEAEEARLLADLRRACLYFIYDALSSLRPFELRKLPSHHAKYHSWMQVQVSLAAECRLAEDSARWSSDTQEQRQSLIERVGRSSVNGEMVCKLGPHLAAIIRQEKMPLELMMENNMLNHYYQNALKCDRILSQAAHILQNLIHKNPRARILEIGAGTGSFTRYALPKIGTAATGGPLAELYHFTDISPAFFEAAREEFAAWDDIMVFEKLDIEQDPASQGYDMESYDIVVAVQVLHATTSMSKTMSHVRKLMKPGGHLLLVETTHDQLDTEFAFGLLPGWWLSEEPQRALSPSMSVPLWDETLKAAALSGVDFEVRDCESDEWYMMSVITSTAVPAHQLTLNPDSIVFVERKDAPCRQRWLEILRSNFAAAGQSPPVVEFETATAESYKGKWTVFLGEVDKPLLYDLDATGLKNIQTMIKHSRSLLWVTRGGAVKCERPELSLATGFLRSIRHEYAGRRFVTFDLDPHESLWSDTSTADIAKVMTTSFGSAADNAQTPPPYDFEYAVREGVILVPRLFRDSARNQAINPASVCWASPEALPTESFFQSNRTLALKVGVPGLLDTIAFDDDPAALADCTQLPPDLVEIKPRAYGVNFRDVLVAMGQLEERVMGVDCAGVITRVGCQAAAHGYAPGDNVFALVRSGYSSRPRVEWTNAMHIPQGLSFEQAASVPAIFTTVYLCFYKIARLQRGQTVLIHAGAGGVGQTAIQFARHIGAEVYTTVGSAEKRELLIQRYGIPADHIFSSRDASFADGILEATNGRGVDVVLNSLAGPLLQASLNILAPFGHFVEVGKRDIEQNSHLEMRPFSRHITFSSFDLLALSQHDKRSIHSSLIEIRRLLEEGAISPVYPVSTYPLGDIGKVFRLLQVGKHSGKVVLSISPDEQVRVVPQARTAKLRSDASYLLVGGAGGIGRSMAHWLAAHGAKNIIVLSRSAGTSPAVAELVAELQPLGCHVKPISCDASVKADLAAALSSCSAELPPIRGVIQAAMVLQDSVLERMTFEDWQTSLNPKVRASWNVHTQLRDADLDFFVFLSSMSGIYGYTTQSNYSAGNTYEDALAHWRVSQGLPAVSMDLGPVKSVGYVAGVAGVADRMTKLGHFPVTEEQVLRVLETAVLSPFDKQVAMGINQGPGSHWHPVGPSPLGRDARFRSLQYQKSTQRQATNGYSNASTSLASRLSDAKTRQQAEKLVVEAIASKLADIFMIPVAHVDAAKHLSEYGLDSLSAVELRNMLALQAAADVSIFSIMQSESLAALASEVTRKSTHVPASLSVM</sequence>
<comment type="function">
    <text evidence="5 8 9">Highly reducing polyketide synthase; part of a cluster that mediates the biosynthesis of a yet undetermined secondary metabolite (Probable) (PubMed:39334518). With esterase AN6793, produces a pathway intermediate compound with molecular weight 258 (PubMed:39334518).</text>
</comment>
<comment type="cofactor">
    <cofactor evidence="2">
        <name>pantetheine 4'-phosphate</name>
        <dbReference type="ChEBI" id="CHEBI:47942"/>
    </cofactor>
</comment>
<comment type="pathway">
    <text evidence="5">Secondary metabolite biosynthesis.</text>
</comment>
<comment type="induction">
    <text evidence="5">Expression seems not to be regulated by the 2 transcription factors AN6788 and AN6790 present in the cluster.</text>
</comment>
<comment type="domain">
    <text evidence="7">Multidomain protein; including a ketosynthase (KS) that catalyzes repeated decarboxylative condensation to elongate the polyketide backbone; a malonyl-CoA:ACP transacylase (MAT) that selects and transfers the extender unit malonyl-CoA; a dehydratase (DH) domain that reduces hydroxyl groups to enoyl groups; a methyltransferase (CMeT) domain responsible for the incorporation of methyl groups; an enoylreductase (ER) domain that reduces enoyl groups to alkyl group; a ketoreductase (KR) domain that catalyzes beta-ketoreduction steps; and an acyl-carrier protein (ACP) that serves as the tether of the growing and completed polyketide via its phosphopantetheinyl arm.</text>
</comment>
<protein>
    <recommendedName>
        <fullName evidence="6">Highly reducing polyketide synthase AN6791</fullName>
        <shortName evidence="6">HR-PKS</shortName>
        <ecNumber evidence="5">2.3.1.-</ecNumber>
    </recommendedName>
</protein>
<proteinExistence type="evidence at transcript level"/>
<evidence type="ECO:0000255" key="1"/>
<evidence type="ECO:0000255" key="2">
    <source>
        <dbReference type="PROSITE-ProRule" id="PRU00258"/>
    </source>
</evidence>
<evidence type="ECO:0000255" key="3">
    <source>
        <dbReference type="PROSITE-ProRule" id="PRU01348"/>
    </source>
</evidence>
<evidence type="ECO:0000255" key="4">
    <source>
        <dbReference type="PROSITE-ProRule" id="PRU01363"/>
    </source>
</evidence>
<evidence type="ECO:0000269" key="5">
    <source>
    </source>
</evidence>
<evidence type="ECO:0000303" key="6">
    <source>
    </source>
</evidence>
<evidence type="ECO:0000305" key="7"/>
<evidence type="ECO:0000305" key="8">
    <source>
    </source>
</evidence>
<evidence type="ECO:0000305" key="9">
    <source>
    </source>
</evidence>
<feature type="chain" id="PRO_0000461776" description="Highly reducing polyketide synthase AN6791">
    <location>
        <begin position="1"/>
        <end position="2568"/>
    </location>
</feature>
<feature type="domain" description="Ketosynthase family 3 (KS3)" evidence="3">
    <location>
        <begin position="11"/>
        <end position="445"/>
    </location>
</feature>
<feature type="domain" description="Malonyl-CoA:ACP transacylase (MAT)" evidence="1">
    <location>
        <begin position="558"/>
        <end position="882"/>
    </location>
</feature>
<feature type="domain" description="PKS/mFAS DH" evidence="4">
    <location>
        <begin position="949"/>
        <end position="1258"/>
    </location>
</feature>
<feature type="domain" description="Enoyl reductase (ER)" evidence="1">
    <location>
        <begin position="1857"/>
        <end position="2174"/>
    </location>
</feature>
<feature type="domain" description="Ketoreductase (KR)" evidence="1">
    <location>
        <begin position="2197"/>
        <end position="2375"/>
    </location>
</feature>
<feature type="domain" description="Carrier" evidence="2">
    <location>
        <begin position="2481"/>
        <end position="2558"/>
    </location>
</feature>
<feature type="region of interest" description="N-terminal hotdog fold" evidence="4">
    <location>
        <begin position="949"/>
        <end position="1087"/>
    </location>
</feature>
<feature type="region of interest" description="C-terminal hotdog fold" evidence="4">
    <location>
        <begin position="1104"/>
        <end position="1258"/>
    </location>
</feature>
<feature type="region of interest" description="Methyltransferase (CMet) domain" evidence="1">
    <location>
        <begin position="1311"/>
        <end position="1620"/>
    </location>
</feature>
<feature type="active site" description="For beta-ketoacyl synthase activity" evidence="3">
    <location>
        <position position="200"/>
    </location>
</feature>
<feature type="active site" description="For beta-ketoacyl synthase activity" evidence="3">
    <location>
        <position position="326"/>
    </location>
</feature>
<feature type="active site" description="For beta-ketoacyl synthase activity" evidence="3">
    <location>
        <position position="366"/>
    </location>
</feature>
<feature type="active site" description="Proton acceptor; for dehydratase activity" evidence="4">
    <location>
        <position position="981"/>
    </location>
</feature>
<feature type="active site" description="Proton donor; for dehydratase activity" evidence="4">
    <location>
        <position position="1169"/>
    </location>
</feature>
<feature type="modified residue" description="O-(pantetheine 4'-phosphoryl)serine" evidence="2">
    <location>
        <position position="2518"/>
    </location>
</feature>